<name>C1QB_MOUSE</name>
<keyword id="KW-0106">Calcium</keyword>
<keyword id="KW-0176">Collagen</keyword>
<keyword id="KW-0180">Complement pathway</keyword>
<keyword id="KW-1015">Disulfide bond</keyword>
<keyword id="KW-0325">Glycoprotein</keyword>
<keyword id="KW-0379">Hydroxylation</keyword>
<keyword id="KW-0391">Immunity</keyword>
<keyword id="KW-0399">Innate immunity</keyword>
<keyword id="KW-0479">Metal-binding</keyword>
<keyword id="KW-0873">Pyrrolidone carboxylic acid</keyword>
<keyword id="KW-1185">Reference proteome</keyword>
<keyword id="KW-0677">Repeat</keyword>
<keyword id="KW-0964">Secreted</keyword>
<keyword id="KW-0732">Signal</keyword>
<organism>
    <name type="scientific">Mus musculus</name>
    <name type="common">Mouse</name>
    <dbReference type="NCBI Taxonomy" id="10090"/>
    <lineage>
        <taxon>Eukaryota</taxon>
        <taxon>Metazoa</taxon>
        <taxon>Chordata</taxon>
        <taxon>Craniata</taxon>
        <taxon>Vertebrata</taxon>
        <taxon>Euteleostomi</taxon>
        <taxon>Mammalia</taxon>
        <taxon>Eutheria</taxon>
        <taxon>Euarchontoglires</taxon>
        <taxon>Glires</taxon>
        <taxon>Rodentia</taxon>
        <taxon>Myomorpha</taxon>
        <taxon>Muroidea</taxon>
        <taxon>Muridae</taxon>
        <taxon>Murinae</taxon>
        <taxon>Mus</taxon>
        <taxon>Mus</taxon>
    </lineage>
</organism>
<gene>
    <name evidence="6 8" type="primary">C1qb</name>
</gene>
<comment type="function">
    <text evidence="1">Core component of the complement C1 complex, a multiprotein complex that initiates the classical pathway of the complement system, a cascade of proteins that leads to phagocytosis and breakdown of pathogens and signaling that strengthens the adaptive immune system. The classical complement pathway is initiated by the C1Q subcomplex of the C1 complex, which specifically binds IgG or IgM immunoglobulins complexed with antigens, forming antigen-antibody complexes on the surface of pathogens: C1QA, together with C1QB and C1QC, specifically recognizes and binds the Fc regions of IgG or IgM via its C1q domain. Immunoglobulin-binding activates the proenzyme C1R, which cleaves C1S, initiating the proteolytic cascade of the complement system. The C1Q subcomplex is activated by a hexamer of IgG complexed with antigens, while it is activated by a pentameric IgM. The C1Q subcomplex also recognizes and binds phosphatidylserine exposed on the surface of cells undergoing programmed cell death, possibly promoting activation of the complement system.</text>
</comment>
<comment type="activity regulation">
    <text evidence="1">The C1Q subcomplex is inhibited by sulfated molecules, such as triterpenoid sulfates, heparan sulfate, or chondroitin sulfates.</text>
</comment>
<comment type="subunit">
    <text evidence="1">Core component of the complement C1 complex, a calcium-dependent complex composed of 1 molecule of the C1Q subcomplex, 2 molecules of C1R and 2 molecules of C1S. The C1Q subcomplex is composed 18 subunits: 3 chains of C1QA, C1QB, and C1QC trimerize to form 6 collagen-like triple helices connected to six globular ligand-recognition modules (C1q domain).</text>
</comment>
<comment type="subcellular location">
    <subcellularLocation>
        <location evidence="1">Secreted</location>
    </subcellularLocation>
    <subcellularLocation>
        <location evidence="1">Cell surface</location>
    </subcellularLocation>
    <text evidence="1">Specifically binds IgG or IgM immunoglobulins complexed with antigens, forming antigen-antibody complexes on the surface of pathogens.</text>
</comment>
<comment type="tissue specificity">
    <text evidence="4">Highest expression in thioglycolate-activated peritoneal macrophages. Also found in spleen, thymus and heart. Very weak expression liver, kidney, lung and intestine.</text>
</comment>
<comment type="domain">
    <text evidence="1">The C1q domain is the ligand-recognition domain, which specifically recognizes and binds the Fc regions of IgG or IgM immunoglobulins.</text>
</comment>
<comment type="domain">
    <text evidence="1">The collagen-like domain interacts with C1R and C1S proenzymes.</text>
</comment>
<comment type="PTM">
    <text evidence="5">Hydroxylated on lysine and proline residues. Hydroxylated lysine residues can be glycosylated. Mouse C1Q contains up to 64.0 hydroxylysine-galactosylglucose residues. Total percentage hydroxylysine residues glycosylated is 95.1%. Contains no hydroxylysine-monosaccharides.</text>
</comment>
<proteinExistence type="evidence at protein level"/>
<reference key="1">
    <citation type="journal article" date="1989" name="FEBS Lett.">
        <title>Molecular cloning and characterization of the complementary DNA coding for the B-chain of murine Clq.</title>
        <authorList>
            <person name="Petry F."/>
            <person name="Reid K.B.M."/>
            <person name="Loos M."/>
        </authorList>
    </citation>
    <scope>NUCLEOTIDE SEQUENCE [MRNA]</scope>
    <scope>TISSUE SPECIFICITY</scope>
    <source>
        <strain>ICR</strain>
        <tissue>Macrophage</tissue>
    </source>
</reference>
<reference key="2">
    <citation type="journal article" date="1988" name="Immunol. Lett.">
        <title>cDNA clones coding for the complete murine B chain of complement Clq: nucleotide and derived amino acid sequences.</title>
        <authorList>
            <person name="Wood L."/>
            <person name="Pulaski S."/>
            <person name="Vogeli G."/>
        </authorList>
    </citation>
    <scope>NUCLEOTIDE SEQUENCE [MRNA]</scope>
</reference>
<reference key="3">
    <citation type="journal article" date="1996" name="Immunogenetics">
        <title>The mouse C1q genes are clustered on chromosome 4 and show conservation of gene organization.</title>
        <authorList>
            <person name="Petry F."/>
            <person name="McClive P.J."/>
            <person name="Botto M."/>
            <person name="Morley B.J."/>
            <person name="Morahan G."/>
            <person name="Loos M."/>
        </authorList>
    </citation>
    <scope>NUCLEOTIDE SEQUENCE [GENOMIC DNA]</scope>
    <source>
        <strain>BALB/cJ</strain>
        <tissue>Liver</tissue>
    </source>
</reference>
<reference key="4">
    <citation type="journal article" date="2005" name="Science">
        <title>The transcriptional landscape of the mammalian genome.</title>
        <authorList>
            <person name="Carninci P."/>
            <person name="Kasukawa T."/>
            <person name="Katayama S."/>
            <person name="Gough J."/>
            <person name="Frith M.C."/>
            <person name="Maeda N."/>
            <person name="Oyama R."/>
            <person name="Ravasi T."/>
            <person name="Lenhard B."/>
            <person name="Wells C."/>
            <person name="Kodzius R."/>
            <person name="Shimokawa K."/>
            <person name="Bajic V.B."/>
            <person name="Brenner S.E."/>
            <person name="Batalov S."/>
            <person name="Forrest A.R."/>
            <person name="Zavolan M."/>
            <person name="Davis M.J."/>
            <person name="Wilming L.G."/>
            <person name="Aidinis V."/>
            <person name="Allen J.E."/>
            <person name="Ambesi-Impiombato A."/>
            <person name="Apweiler R."/>
            <person name="Aturaliya R.N."/>
            <person name="Bailey T.L."/>
            <person name="Bansal M."/>
            <person name="Baxter L."/>
            <person name="Beisel K.W."/>
            <person name="Bersano T."/>
            <person name="Bono H."/>
            <person name="Chalk A.M."/>
            <person name="Chiu K.P."/>
            <person name="Choudhary V."/>
            <person name="Christoffels A."/>
            <person name="Clutterbuck D.R."/>
            <person name="Crowe M.L."/>
            <person name="Dalla E."/>
            <person name="Dalrymple B.P."/>
            <person name="de Bono B."/>
            <person name="Della Gatta G."/>
            <person name="di Bernardo D."/>
            <person name="Down T."/>
            <person name="Engstrom P."/>
            <person name="Fagiolini M."/>
            <person name="Faulkner G."/>
            <person name="Fletcher C.F."/>
            <person name="Fukushima T."/>
            <person name="Furuno M."/>
            <person name="Futaki S."/>
            <person name="Gariboldi M."/>
            <person name="Georgii-Hemming P."/>
            <person name="Gingeras T.R."/>
            <person name="Gojobori T."/>
            <person name="Green R.E."/>
            <person name="Gustincich S."/>
            <person name="Harbers M."/>
            <person name="Hayashi Y."/>
            <person name="Hensch T.K."/>
            <person name="Hirokawa N."/>
            <person name="Hill D."/>
            <person name="Huminiecki L."/>
            <person name="Iacono M."/>
            <person name="Ikeo K."/>
            <person name="Iwama A."/>
            <person name="Ishikawa T."/>
            <person name="Jakt M."/>
            <person name="Kanapin A."/>
            <person name="Katoh M."/>
            <person name="Kawasawa Y."/>
            <person name="Kelso J."/>
            <person name="Kitamura H."/>
            <person name="Kitano H."/>
            <person name="Kollias G."/>
            <person name="Krishnan S.P."/>
            <person name="Kruger A."/>
            <person name="Kummerfeld S.K."/>
            <person name="Kurochkin I.V."/>
            <person name="Lareau L.F."/>
            <person name="Lazarevic D."/>
            <person name="Lipovich L."/>
            <person name="Liu J."/>
            <person name="Liuni S."/>
            <person name="McWilliam S."/>
            <person name="Madan Babu M."/>
            <person name="Madera M."/>
            <person name="Marchionni L."/>
            <person name="Matsuda H."/>
            <person name="Matsuzawa S."/>
            <person name="Miki H."/>
            <person name="Mignone F."/>
            <person name="Miyake S."/>
            <person name="Morris K."/>
            <person name="Mottagui-Tabar S."/>
            <person name="Mulder N."/>
            <person name="Nakano N."/>
            <person name="Nakauchi H."/>
            <person name="Ng P."/>
            <person name="Nilsson R."/>
            <person name="Nishiguchi S."/>
            <person name="Nishikawa S."/>
            <person name="Nori F."/>
            <person name="Ohara O."/>
            <person name="Okazaki Y."/>
            <person name="Orlando V."/>
            <person name="Pang K.C."/>
            <person name="Pavan W.J."/>
            <person name="Pavesi G."/>
            <person name="Pesole G."/>
            <person name="Petrovsky N."/>
            <person name="Piazza S."/>
            <person name="Reed J."/>
            <person name="Reid J.F."/>
            <person name="Ring B.Z."/>
            <person name="Ringwald M."/>
            <person name="Rost B."/>
            <person name="Ruan Y."/>
            <person name="Salzberg S.L."/>
            <person name="Sandelin A."/>
            <person name="Schneider C."/>
            <person name="Schoenbach C."/>
            <person name="Sekiguchi K."/>
            <person name="Semple C.A."/>
            <person name="Seno S."/>
            <person name="Sessa L."/>
            <person name="Sheng Y."/>
            <person name="Shibata Y."/>
            <person name="Shimada H."/>
            <person name="Shimada K."/>
            <person name="Silva D."/>
            <person name="Sinclair B."/>
            <person name="Sperling S."/>
            <person name="Stupka E."/>
            <person name="Sugiura K."/>
            <person name="Sultana R."/>
            <person name="Takenaka Y."/>
            <person name="Taki K."/>
            <person name="Tammoja K."/>
            <person name="Tan S.L."/>
            <person name="Tang S."/>
            <person name="Taylor M.S."/>
            <person name="Tegner J."/>
            <person name="Teichmann S.A."/>
            <person name="Ueda H.R."/>
            <person name="van Nimwegen E."/>
            <person name="Verardo R."/>
            <person name="Wei C.L."/>
            <person name="Yagi K."/>
            <person name="Yamanishi H."/>
            <person name="Zabarovsky E."/>
            <person name="Zhu S."/>
            <person name="Zimmer A."/>
            <person name="Hide W."/>
            <person name="Bult C."/>
            <person name="Grimmond S.M."/>
            <person name="Teasdale R.D."/>
            <person name="Liu E.T."/>
            <person name="Brusic V."/>
            <person name="Quackenbush J."/>
            <person name="Wahlestedt C."/>
            <person name="Mattick J.S."/>
            <person name="Hume D.A."/>
            <person name="Kai C."/>
            <person name="Sasaki D."/>
            <person name="Tomaru Y."/>
            <person name="Fukuda S."/>
            <person name="Kanamori-Katayama M."/>
            <person name="Suzuki M."/>
            <person name="Aoki J."/>
            <person name="Arakawa T."/>
            <person name="Iida J."/>
            <person name="Imamura K."/>
            <person name="Itoh M."/>
            <person name="Kato T."/>
            <person name="Kawaji H."/>
            <person name="Kawagashira N."/>
            <person name="Kawashima T."/>
            <person name="Kojima M."/>
            <person name="Kondo S."/>
            <person name="Konno H."/>
            <person name="Nakano K."/>
            <person name="Ninomiya N."/>
            <person name="Nishio T."/>
            <person name="Okada M."/>
            <person name="Plessy C."/>
            <person name="Shibata K."/>
            <person name="Shiraki T."/>
            <person name="Suzuki S."/>
            <person name="Tagami M."/>
            <person name="Waki K."/>
            <person name="Watahiki A."/>
            <person name="Okamura-Oho Y."/>
            <person name="Suzuki H."/>
            <person name="Kawai J."/>
            <person name="Hayashizaki Y."/>
        </authorList>
    </citation>
    <scope>NUCLEOTIDE SEQUENCE [LARGE SCALE MRNA]</scope>
    <source>
        <strain>C57BL/6J</strain>
        <tissue>Bone marrow</tissue>
    </source>
</reference>
<reference key="5">
    <citation type="journal article" date="2009" name="PLoS Biol.">
        <title>Lineage-specific biology revealed by a finished genome assembly of the mouse.</title>
        <authorList>
            <person name="Church D.M."/>
            <person name="Goodstadt L."/>
            <person name="Hillier L.W."/>
            <person name="Zody M.C."/>
            <person name="Goldstein S."/>
            <person name="She X."/>
            <person name="Bult C.J."/>
            <person name="Agarwala R."/>
            <person name="Cherry J.L."/>
            <person name="DiCuccio M."/>
            <person name="Hlavina W."/>
            <person name="Kapustin Y."/>
            <person name="Meric P."/>
            <person name="Maglott D."/>
            <person name="Birtle Z."/>
            <person name="Marques A.C."/>
            <person name="Graves T."/>
            <person name="Zhou S."/>
            <person name="Teague B."/>
            <person name="Potamousis K."/>
            <person name="Churas C."/>
            <person name="Place M."/>
            <person name="Herschleb J."/>
            <person name="Runnheim R."/>
            <person name="Forrest D."/>
            <person name="Amos-Landgraf J."/>
            <person name="Schwartz D.C."/>
            <person name="Cheng Z."/>
            <person name="Lindblad-Toh K."/>
            <person name="Eichler E.E."/>
            <person name="Ponting C.P."/>
        </authorList>
    </citation>
    <scope>NUCLEOTIDE SEQUENCE [LARGE SCALE GENOMIC DNA]</scope>
    <source>
        <strain>C57BL/6J</strain>
    </source>
</reference>
<reference key="6">
    <citation type="journal article" date="2004" name="Genome Res.">
        <title>The status, quality, and expansion of the NIH full-length cDNA project: the Mammalian Gene Collection (MGC).</title>
        <authorList>
            <consortium name="The MGC Project Team"/>
        </authorList>
    </citation>
    <scope>NUCLEOTIDE SEQUENCE [LARGE SCALE MRNA]</scope>
    <source>
        <strain>C57BL/6J</strain>
    </source>
</reference>
<reference key="7">
    <citation type="journal article" date="1981" name="Coll. Relat. Res.">
        <title>Comparable content of hydroxylysine-linked glycosides in subcomponents C1q of the first component of human, bovine and mouse complement.</title>
        <authorList>
            <person name="Yonemasu K."/>
            <person name="Shinkai H."/>
            <person name="Sasaki T."/>
        </authorList>
    </citation>
    <scope>GLYCOSYLATION ON HYDROXYLYSINES</scope>
</reference>
<reference key="8">
    <citation type="journal article" date="2010" name="Cell">
        <title>A tissue-specific atlas of mouse protein phosphorylation and expression.</title>
        <authorList>
            <person name="Huttlin E.L."/>
            <person name="Jedrychowski M.P."/>
            <person name="Elias J.E."/>
            <person name="Goswami T."/>
            <person name="Rad R."/>
            <person name="Beausoleil S.A."/>
            <person name="Villen J."/>
            <person name="Haas W."/>
            <person name="Sowa M.E."/>
            <person name="Gygi S.P."/>
        </authorList>
    </citation>
    <scope>IDENTIFICATION BY MASS SPECTROMETRY [LARGE SCALE ANALYSIS]</scope>
    <source>
        <tissue>Brain</tissue>
        <tissue>Liver</tissue>
        <tissue>Spleen</tissue>
    </source>
</reference>
<protein>
    <recommendedName>
        <fullName>Complement C1q subcomponent subunit B</fullName>
    </recommendedName>
</protein>
<feature type="signal peptide" evidence="1">
    <location>
        <begin position="1"/>
        <end position="25"/>
    </location>
</feature>
<feature type="chain" id="PRO_0000003522" description="Complement C1q subcomponent subunit B">
    <location>
        <begin position="26"/>
        <end position="253"/>
    </location>
</feature>
<feature type="domain" description="Collagen-like">
    <location>
        <begin position="29"/>
        <end position="112"/>
    </location>
</feature>
<feature type="domain" description="C1q" evidence="2">
    <location>
        <begin position="115"/>
        <end position="253"/>
    </location>
</feature>
<feature type="region of interest" description="Disordered" evidence="3">
    <location>
        <begin position="35"/>
        <end position="115"/>
    </location>
</feature>
<feature type="compositionally biased region" description="Low complexity" evidence="3">
    <location>
        <begin position="78"/>
        <end position="96"/>
    </location>
</feature>
<feature type="binding site" evidence="1">
    <location>
        <position position="199"/>
    </location>
    <ligand>
        <name>Ca(2+)</name>
        <dbReference type="ChEBI" id="CHEBI:29108"/>
    </ligand>
</feature>
<feature type="binding site" evidence="1">
    <location>
        <position position="200"/>
    </location>
    <ligand>
        <name>Ca(2+)</name>
        <dbReference type="ChEBI" id="CHEBI:29108"/>
    </ligand>
</feature>
<feature type="binding site" evidence="1">
    <location>
        <position position="206"/>
    </location>
    <ligand>
        <name>Ca(2+)</name>
        <dbReference type="ChEBI" id="CHEBI:29108"/>
    </ligand>
</feature>
<feature type="modified residue" description="Pyrrolidone carboxylic acid" evidence="1">
    <location>
        <position position="26"/>
    </location>
</feature>
<feature type="modified residue" description="4-hydroxyproline" evidence="1">
    <location>
        <position position="33"/>
    </location>
</feature>
<feature type="modified residue" description="4-hydroxyproline" evidence="1">
    <location>
        <position position="36"/>
    </location>
</feature>
<feature type="modified residue" description="4-hydroxyproline" evidence="1">
    <location>
        <position position="39"/>
    </location>
</feature>
<feature type="modified residue" description="4-hydroxyproline" evidence="1">
    <location>
        <position position="51"/>
    </location>
</feature>
<feature type="modified residue" description="4-hydroxyproline" evidence="1">
    <location>
        <position position="54"/>
    </location>
</feature>
<feature type="modified residue" description="5-hydroxylysine" evidence="1">
    <location>
        <position position="57"/>
    </location>
</feature>
<feature type="modified residue" description="5-hydroxylysine" evidence="1">
    <location>
        <position position="60"/>
    </location>
</feature>
<feature type="modified residue" description="4-hydroxyproline" evidence="1">
    <location>
        <position position="63"/>
    </location>
</feature>
<feature type="modified residue" description="5-hydroxylysine" evidence="1">
    <location>
        <position position="75"/>
    </location>
</feature>
<feature type="modified residue" description="4-hydroxyproline" evidence="1">
    <location>
        <position position="81"/>
    </location>
</feature>
<feature type="modified residue" description="4-hydroxyproline" evidence="1">
    <location>
        <position position="84"/>
    </location>
</feature>
<feature type="modified residue" description="5-hydroxylysine" evidence="1">
    <location>
        <position position="90"/>
    </location>
</feature>
<feature type="modified residue" description="5-hydroxylysine" evidence="1">
    <location>
        <position position="96"/>
    </location>
</feature>
<feature type="modified residue" description="4-hydroxyproline" evidence="1">
    <location>
        <position position="99"/>
    </location>
</feature>
<feature type="modified residue" description="5-hydroxylysine" evidence="1">
    <location>
        <position position="108"/>
    </location>
</feature>
<feature type="disulfide bond" description="Interchain (with C-26 in chain A)" evidence="1">
    <location>
        <position position="29"/>
    </location>
</feature>
<feature type="disulfide bond" evidence="1">
    <location>
        <begin position="179"/>
        <end position="198"/>
    </location>
</feature>
<feature type="sequence conflict" description="In Ref. 1; CAA34757." evidence="7" ref="1">
    <original>G</original>
    <variation>R</variation>
    <location>
        <position position="115"/>
    </location>
</feature>
<dbReference type="EMBL" id="X16874">
    <property type="protein sequence ID" value="CAA34757.1"/>
    <property type="molecule type" value="mRNA"/>
</dbReference>
<dbReference type="EMBL" id="M36293">
    <property type="protein sequence ID" value="AAA37283.1"/>
    <property type="molecule type" value="mRNA"/>
</dbReference>
<dbReference type="EMBL" id="M22531">
    <property type="protein sequence ID" value="AAA37335.1"/>
    <property type="molecule type" value="mRNA"/>
</dbReference>
<dbReference type="EMBL" id="X92959">
    <property type="protein sequence ID" value="CAA63534.1"/>
    <property type="molecule type" value="Genomic_DNA"/>
</dbReference>
<dbReference type="EMBL" id="AK152764">
    <property type="protein sequence ID" value="BAE31477.1"/>
    <property type="molecule type" value="mRNA"/>
</dbReference>
<dbReference type="EMBL" id="AL627214">
    <property type="status" value="NOT_ANNOTATED_CDS"/>
    <property type="molecule type" value="Genomic_DNA"/>
</dbReference>
<dbReference type="EMBL" id="BC067001">
    <property type="protein sequence ID" value="AAH67001.1"/>
    <property type="molecule type" value="mRNA"/>
</dbReference>
<dbReference type="CCDS" id="CCDS18810.1"/>
<dbReference type="PIR" id="I49560">
    <property type="entry name" value="I49560"/>
</dbReference>
<dbReference type="RefSeq" id="NP_033907.1">
    <property type="nucleotide sequence ID" value="NM_009777.3"/>
</dbReference>
<dbReference type="SMR" id="P14106"/>
<dbReference type="BioGRID" id="198413">
    <property type="interactions" value="8"/>
</dbReference>
<dbReference type="ComplexPortal" id="CPX-4981">
    <property type="entry name" value="Complement component C1q complex"/>
</dbReference>
<dbReference type="FunCoup" id="P14106">
    <property type="interactions" value="41"/>
</dbReference>
<dbReference type="IntAct" id="P14106">
    <property type="interactions" value="2"/>
</dbReference>
<dbReference type="MINT" id="P14106"/>
<dbReference type="STRING" id="10090.ENSMUSP00000040246"/>
<dbReference type="GlyGen" id="P14106">
    <property type="glycosylation" value="3 sites, 1 O-linked glycan (1 site)"/>
</dbReference>
<dbReference type="PhosphoSitePlus" id="P14106"/>
<dbReference type="SwissPalm" id="P14106"/>
<dbReference type="CPTAC" id="non-CPTAC-5579"/>
<dbReference type="jPOST" id="P14106"/>
<dbReference type="PaxDb" id="10090-ENSMUSP00000040246"/>
<dbReference type="PeptideAtlas" id="P14106"/>
<dbReference type="ProteomicsDB" id="265398"/>
<dbReference type="Antibodypedia" id="30104">
    <property type="antibodies" value="275 antibodies from 29 providers"/>
</dbReference>
<dbReference type="DNASU" id="12260"/>
<dbReference type="Ensembl" id="ENSMUST00000046384.9">
    <property type="protein sequence ID" value="ENSMUSP00000040246.9"/>
    <property type="gene ID" value="ENSMUSG00000036905.9"/>
</dbReference>
<dbReference type="GeneID" id="12260"/>
<dbReference type="KEGG" id="mmu:12260"/>
<dbReference type="UCSC" id="uc008vip.2">
    <property type="organism name" value="mouse"/>
</dbReference>
<dbReference type="AGR" id="MGI:88224"/>
<dbReference type="CTD" id="713"/>
<dbReference type="MGI" id="MGI:88224">
    <property type="gene designation" value="C1qb"/>
</dbReference>
<dbReference type="VEuPathDB" id="HostDB:ENSMUSG00000036905"/>
<dbReference type="eggNOG" id="ENOG502RYR2">
    <property type="taxonomic scope" value="Eukaryota"/>
</dbReference>
<dbReference type="GeneTree" id="ENSGT00940000161091"/>
<dbReference type="HOGENOM" id="CLU_001074_0_2_1"/>
<dbReference type="InParanoid" id="P14106"/>
<dbReference type="OMA" id="WAMLICL"/>
<dbReference type="OrthoDB" id="8964326at2759"/>
<dbReference type="PhylomeDB" id="P14106"/>
<dbReference type="TreeFam" id="TF329591"/>
<dbReference type="Reactome" id="R-MMU-166663">
    <property type="pathway name" value="Initial triggering of complement"/>
</dbReference>
<dbReference type="Reactome" id="R-MMU-173623">
    <property type="pathway name" value="Classical antibody-mediated complement activation"/>
</dbReference>
<dbReference type="Reactome" id="R-MMU-977606">
    <property type="pathway name" value="Regulation of Complement cascade"/>
</dbReference>
<dbReference type="BioGRID-ORCS" id="12260">
    <property type="hits" value="2 hits in 79 CRISPR screens"/>
</dbReference>
<dbReference type="ChiTaRS" id="C1qb">
    <property type="organism name" value="mouse"/>
</dbReference>
<dbReference type="PRO" id="PR:P14106"/>
<dbReference type="Proteomes" id="UP000000589">
    <property type="component" value="Chromosome 4"/>
</dbReference>
<dbReference type="RNAct" id="P14106">
    <property type="molecule type" value="protein"/>
</dbReference>
<dbReference type="Bgee" id="ENSMUSG00000036905">
    <property type="expression patterns" value="Expressed in stroma of bone marrow and 254 other cell types or tissues"/>
</dbReference>
<dbReference type="GO" id="GO:0005581">
    <property type="term" value="C:collagen trimer"/>
    <property type="evidence" value="ECO:0007669"/>
    <property type="project" value="UniProtKB-KW"/>
</dbReference>
<dbReference type="GO" id="GO:0005602">
    <property type="term" value="C:complement component C1 complex"/>
    <property type="evidence" value="ECO:0000303"/>
    <property type="project" value="ComplexPortal"/>
</dbReference>
<dbReference type="GO" id="GO:0062167">
    <property type="term" value="C:complement component C1q complex"/>
    <property type="evidence" value="ECO:0000266"/>
    <property type="project" value="ComplexPortal"/>
</dbReference>
<dbReference type="GO" id="GO:0005576">
    <property type="term" value="C:extracellular region"/>
    <property type="evidence" value="ECO:0000266"/>
    <property type="project" value="ComplexPortal"/>
</dbReference>
<dbReference type="GO" id="GO:0005615">
    <property type="term" value="C:extracellular space"/>
    <property type="evidence" value="ECO:0007005"/>
    <property type="project" value="BHF-UCL"/>
</dbReference>
<dbReference type="GO" id="GO:0098890">
    <property type="term" value="C:extrinsic component of postsynaptic membrane"/>
    <property type="evidence" value="ECO:0000314"/>
    <property type="project" value="SynGO"/>
</dbReference>
<dbReference type="GO" id="GO:0098888">
    <property type="term" value="C:extrinsic component of presynaptic membrane"/>
    <property type="evidence" value="ECO:0000314"/>
    <property type="project" value="SynGO"/>
</dbReference>
<dbReference type="GO" id="GO:0098978">
    <property type="term" value="C:glutamatergic synapse"/>
    <property type="evidence" value="ECO:0000314"/>
    <property type="project" value="SynGO"/>
</dbReference>
<dbReference type="GO" id="GO:0098794">
    <property type="term" value="C:postsynapse"/>
    <property type="evidence" value="ECO:0000316"/>
    <property type="project" value="ARUK-UCL"/>
</dbReference>
<dbReference type="GO" id="GO:0045202">
    <property type="term" value="C:synapse"/>
    <property type="evidence" value="ECO:0000314"/>
    <property type="project" value="ARUK-UCL"/>
</dbReference>
<dbReference type="GO" id="GO:0042802">
    <property type="term" value="F:identical protein binding"/>
    <property type="evidence" value="ECO:0000353"/>
    <property type="project" value="MGI"/>
</dbReference>
<dbReference type="GO" id="GO:0006958">
    <property type="term" value="P:complement activation, classical pathway"/>
    <property type="evidence" value="ECO:0000266"/>
    <property type="project" value="ComplexPortal"/>
</dbReference>
<dbReference type="GO" id="GO:0045087">
    <property type="term" value="P:innate immune response"/>
    <property type="evidence" value="ECO:0007669"/>
    <property type="project" value="UniProtKB-KW"/>
</dbReference>
<dbReference type="GO" id="GO:0048839">
    <property type="term" value="P:inner ear development"/>
    <property type="evidence" value="ECO:0000314"/>
    <property type="project" value="MGI"/>
</dbReference>
<dbReference type="GO" id="GO:0098883">
    <property type="term" value="P:synapse pruning"/>
    <property type="evidence" value="ECO:0000316"/>
    <property type="project" value="ARUK-UCL"/>
</dbReference>
<dbReference type="FunFam" id="2.60.120.40:FF:000001">
    <property type="entry name" value="Complement C1q B chain"/>
    <property type="match status" value="1"/>
</dbReference>
<dbReference type="Gene3D" id="2.60.120.40">
    <property type="match status" value="1"/>
</dbReference>
<dbReference type="InterPro" id="IPR001073">
    <property type="entry name" value="C1q_dom"/>
</dbReference>
<dbReference type="InterPro" id="IPR008160">
    <property type="entry name" value="Collagen"/>
</dbReference>
<dbReference type="InterPro" id="IPR050392">
    <property type="entry name" value="Collagen/C1q_domain"/>
</dbReference>
<dbReference type="InterPro" id="IPR008983">
    <property type="entry name" value="Tumour_necrosis_fac-like_dom"/>
</dbReference>
<dbReference type="PANTHER" id="PTHR15427:SF18">
    <property type="entry name" value="COMPLEMENT C1Q SUBCOMPONENT SUBUNIT B"/>
    <property type="match status" value="1"/>
</dbReference>
<dbReference type="PANTHER" id="PTHR15427">
    <property type="entry name" value="EMILIN ELASTIN MICROFIBRIL INTERFACE-LOCATED PROTEIN ELASTIN MICROFIBRIL INTERFACER"/>
    <property type="match status" value="1"/>
</dbReference>
<dbReference type="Pfam" id="PF00386">
    <property type="entry name" value="C1q"/>
    <property type="match status" value="1"/>
</dbReference>
<dbReference type="Pfam" id="PF01391">
    <property type="entry name" value="Collagen"/>
    <property type="match status" value="2"/>
</dbReference>
<dbReference type="PRINTS" id="PR00007">
    <property type="entry name" value="COMPLEMNTC1Q"/>
</dbReference>
<dbReference type="SMART" id="SM00110">
    <property type="entry name" value="C1Q"/>
    <property type="match status" value="1"/>
</dbReference>
<dbReference type="SUPFAM" id="SSF49842">
    <property type="entry name" value="TNF-like"/>
    <property type="match status" value="1"/>
</dbReference>
<dbReference type="PROSITE" id="PS50871">
    <property type="entry name" value="C1Q"/>
    <property type="match status" value="1"/>
</dbReference>
<evidence type="ECO:0000250" key="1">
    <source>
        <dbReference type="UniProtKB" id="P02746"/>
    </source>
</evidence>
<evidence type="ECO:0000255" key="2">
    <source>
        <dbReference type="PROSITE-ProRule" id="PRU00368"/>
    </source>
</evidence>
<evidence type="ECO:0000256" key="3">
    <source>
        <dbReference type="SAM" id="MobiDB-lite"/>
    </source>
</evidence>
<evidence type="ECO:0000269" key="4">
    <source>
    </source>
</evidence>
<evidence type="ECO:0000269" key="5">
    <source>
    </source>
</evidence>
<evidence type="ECO:0000303" key="6">
    <source>
    </source>
</evidence>
<evidence type="ECO:0000305" key="7"/>
<evidence type="ECO:0000312" key="8">
    <source>
        <dbReference type="MGI" id="MGI:88224"/>
    </source>
</evidence>
<accession>P14106</accession>
<accession>Q3U793</accession>
<sequence length="253" mass="26717">MKTQWGEVWTHLLLLLLGFLHVSWAQSSCTGPPGIPGIPGVPGVPGSDGQPGTPGIKGEKGLPGLAGDLGEFGEKGDPGIPGTPGKVGPKGPVGPKGTPGPSGPRGPKGDSGDYGATQKVAFSALRTINSPLRPNQVIRFEKVITNANENYEPRNGKFTCKVPGLYYFTYHASSRGNLCVNLVRGRDRDSMQKVVTFCDYAQNTFQVTTGGVVLKLEQEEVVHLQATDKNSLLGIEGANSIFTGFLLFPDMDA</sequence>